<gene>
    <name evidence="7" type="primary">APX3</name>
    <name evidence="10" type="ordered locus">Os04g0223300</name>
    <name evidence="8" type="ordered locus">LOC_Os04g14680</name>
    <name evidence="12" type="ORF">OsJ_013310</name>
    <name evidence="11" type="ORF">OSJNBb0072N21.2</name>
</gene>
<reference key="1">
    <citation type="journal article" date="2002" name="Nature">
        <title>Sequence and analysis of rice chromosome 4.</title>
        <authorList>
            <person name="Feng Q."/>
            <person name="Zhang Y."/>
            <person name="Hao P."/>
            <person name="Wang S."/>
            <person name="Fu G."/>
            <person name="Huang Y."/>
            <person name="Li Y."/>
            <person name="Zhu J."/>
            <person name="Liu Y."/>
            <person name="Hu X."/>
            <person name="Jia P."/>
            <person name="Zhang Y."/>
            <person name="Zhao Q."/>
            <person name="Ying K."/>
            <person name="Yu S."/>
            <person name="Tang Y."/>
            <person name="Weng Q."/>
            <person name="Zhang L."/>
            <person name="Lu Y."/>
            <person name="Mu J."/>
            <person name="Lu Y."/>
            <person name="Zhang L.S."/>
            <person name="Yu Z."/>
            <person name="Fan D."/>
            <person name="Liu X."/>
            <person name="Lu T."/>
            <person name="Li C."/>
            <person name="Wu Y."/>
            <person name="Sun T."/>
            <person name="Lei H."/>
            <person name="Li T."/>
            <person name="Hu H."/>
            <person name="Guan J."/>
            <person name="Wu M."/>
            <person name="Zhang R."/>
            <person name="Zhou B."/>
            <person name="Chen Z."/>
            <person name="Chen L."/>
            <person name="Jin Z."/>
            <person name="Wang R."/>
            <person name="Yin H."/>
            <person name="Cai Z."/>
            <person name="Ren S."/>
            <person name="Lv G."/>
            <person name="Gu W."/>
            <person name="Zhu G."/>
            <person name="Tu Y."/>
            <person name="Jia J."/>
            <person name="Zhang Y."/>
            <person name="Chen J."/>
            <person name="Kang H."/>
            <person name="Chen X."/>
            <person name="Shao C."/>
            <person name="Sun Y."/>
            <person name="Hu Q."/>
            <person name="Zhang X."/>
            <person name="Zhang W."/>
            <person name="Wang L."/>
            <person name="Ding C."/>
            <person name="Sheng H."/>
            <person name="Gu J."/>
            <person name="Chen S."/>
            <person name="Ni L."/>
            <person name="Zhu F."/>
            <person name="Chen W."/>
            <person name="Lan L."/>
            <person name="Lai Y."/>
            <person name="Cheng Z."/>
            <person name="Gu M."/>
            <person name="Jiang J."/>
            <person name="Li J."/>
            <person name="Hong G."/>
            <person name="Xue Y."/>
            <person name="Han B."/>
        </authorList>
    </citation>
    <scope>NUCLEOTIDE SEQUENCE [LARGE SCALE GENOMIC DNA]</scope>
    <source>
        <strain>cv. Nipponbare</strain>
    </source>
</reference>
<reference key="2">
    <citation type="journal article" date="2005" name="Nature">
        <title>The map-based sequence of the rice genome.</title>
        <authorList>
            <consortium name="International rice genome sequencing project (IRGSP)"/>
        </authorList>
    </citation>
    <scope>NUCLEOTIDE SEQUENCE [LARGE SCALE GENOMIC DNA]</scope>
    <source>
        <strain>cv. Nipponbare</strain>
    </source>
</reference>
<reference key="3">
    <citation type="journal article" date="2008" name="Nucleic Acids Res.">
        <title>The rice annotation project database (RAP-DB): 2008 update.</title>
        <authorList>
            <consortium name="The rice annotation project (RAP)"/>
        </authorList>
    </citation>
    <scope>GENOME REANNOTATION</scope>
    <source>
        <strain>cv. Nipponbare</strain>
    </source>
</reference>
<reference key="4">
    <citation type="journal article" date="2013" name="Rice">
        <title>Improvement of the Oryza sativa Nipponbare reference genome using next generation sequence and optical map data.</title>
        <authorList>
            <person name="Kawahara Y."/>
            <person name="de la Bastide M."/>
            <person name="Hamilton J.P."/>
            <person name="Kanamori H."/>
            <person name="McCombie W.R."/>
            <person name="Ouyang S."/>
            <person name="Schwartz D.C."/>
            <person name="Tanaka T."/>
            <person name="Wu J."/>
            <person name="Zhou S."/>
            <person name="Childs K.L."/>
            <person name="Davidson R.M."/>
            <person name="Lin H."/>
            <person name="Quesada-Ocampo L."/>
            <person name="Vaillancourt B."/>
            <person name="Sakai H."/>
            <person name="Lee S.S."/>
            <person name="Kim J."/>
            <person name="Numa H."/>
            <person name="Itoh T."/>
            <person name="Buell C.R."/>
            <person name="Matsumoto T."/>
        </authorList>
    </citation>
    <scope>GENOME REANNOTATION</scope>
    <source>
        <strain>cv. Nipponbare</strain>
    </source>
</reference>
<reference key="5">
    <citation type="journal article" date="2005" name="PLoS Biol.">
        <title>The genomes of Oryza sativa: a history of duplications.</title>
        <authorList>
            <person name="Yu J."/>
            <person name="Wang J."/>
            <person name="Lin W."/>
            <person name="Li S."/>
            <person name="Li H."/>
            <person name="Zhou J."/>
            <person name="Ni P."/>
            <person name="Dong W."/>
            <person name="Hu S."/>
            <person name="Zeng C."/>
            <person name="Zhang J."/>
            <person name="Zhang Y."/>
            <person name="Li R."/>
            <person name="Xu Z."/>
            <person name="Li S."/>
            <person name="Li X."/>
            <person name="Zheng H."/>
            <person name="Cong L."/>
            <person name="Lin L."/>
            <person name="Yin J."/>
            <person name="Geng J."/>
            <person name="Li G."/>
            <person name="Shi J."/>
            <person name="Liu J."/>
            <person name="Lv H."/>
            <person name="Li J."/>
            <person name="Wang J."/>
            <person name="Deng Y."/>
            <person name="Ran L."/>
            <person name="Shi X."/>
            <person name="Wang X."/>
            <person name="Wu Q."/>
            <person name="Li C."/>
            <person name="Ren X."/>
            <person name="Wang J."/>
            <person name="Wang X."/>
            <person name="Li D."/>
            <person name="Liu D."/>
            <person name="Zhang X."/>
            <person name="Ji Z."/>
            <person name="Zhao W."/>
            <person name="Sun Y."/>
            <person name="Zhang Z."/>
            <person name="Bao J."/>
            <person name="Han Y."/>
            <person name="Dong L."/>
            <person name="Ji J."/>
            <person name="Chen P."/>
            <person name="Wu S."/>
            <person name="Liu J."/>
            <person name="Xiao Y."/>
            <person name="Bu D."/>
            <person name="Tan J."/>
            <person name="Yang L."/>
            <person name="Ye C."/>
            <person name="Zhang J."/>
            <person name="Xu J."/>
            <person name="Zhou Y."/>
            <person name="Yu Y."/>
            <person name="Zhang B."/>
            <person name="Zhuang S."/>
            <person name="Wei H."/>
            <person name="Liu B."/>
            <person name="Lei M."/>
            <person name="Yu H."/>
            <person name="Li Y."/>
            <person name="Xu H."/>
            <person name="Wei S."/>
            <person name="He X."/>
            <person name="Fang L."/>
            <person name="Zhang Z."/>
            <person name="Zhang Y."/>
            <person name="Huang X."/>
            <person name="Su Z."/>
            <person name="Tong W."/>
            <person name="Li J."/>
            <person name="Tong Z."/>
            <person name="Li S."/>
            <person name="Ye J."/>
            <person name="Wang L."/>
            <person name="Fang L."/>
            <person name="Lei T."/>
            <person name="Chen C.-S."/>
            <person name="Chen H.-C."/>
            <person name="Xu Z."/>
            <person name="Li H."/>
            <person name="Huang H."/>
            <person name="Zhang F."/>
            <person name="Xu H."/>
            <person name="Li N."/>
            <person name="Zhao C."/>
            <person name="Li S."/>
            <person name="Dong L."/>
            <person name="Huang Y."/>
            <person name="Li L."/>
            <person name="Xi Y."/>
            <person name="Qi Q."/>
            <person name="Li W."/>
            <person name="Zhang B."/>
            <person name="Hu W."/>
            <person name="Zhang Y."/>
            <person name="Tian X."/>
            <person name="Jiao Y."/>
            <person name="Liang X."/>
            <person name="Jin J."/>
            <person name="Gao L."/>
            <person name="Zheng W."/>
            <person name="Hao B."/>
            <person name="Liu S.-M."/>
            <person name="Wang W."/>
            <person name="Yuan L."/>
            <person name="Cao M."/>
            <person name="McDermott J."/>
            <person name="Samudrala R."/>
            <person name="Wang J."/>
            <person name="Wong G.K.-S."/>
            <person name="Yang H."/>
        </authorList>
    </citation>
    <scope>NUCLEOTIDE SEQUENCE [LARGE SCALE GENOMIC DNA]</scope>
    <source>
        <strain>cv. Nipponbare</strain>
    </source>
</reference>
<reference key="6">
    <citation type="journal article" date="2004" name="J. Mol. Evol.">
        <title>Analysis of the molecular evolutionary history of the ascorbate peroxidase gene family: inferences from the rice genome.</title>
        <authorList>
            <person name="Teixeira F.K."/>
            <person name="Menezes-Benavente L."/>
            <person name="Margis R."/>
            <person name="Margis-Pinheiro M."/>
        </authorList>
    </citation>
    <scope>NOMENCLATURE</scope>
</reference>
<reference key="7">
    <citation type="journal article" date="2006" name="Planta">
        <title>Rice ascorbate peroxidase gene family encodes functionally diverse isoforms localized in different subcellular compartments.</title>
        <authorList>
            <person name="Teixeira F.K."/>
            <person name="Menezes-Benavente L."/>
            <person name="Galvao V.C."/>
            <person name="Margis R."/>
            <person name="Margis-Pinheiro M."/>
        </authorList>
    </citation>
    <scope>SUBCELLULAR LOCATION</scope>
    <scope>TISSUE SPECIFICITY</scope>
</reference>
<keyword id="KW-0106">Calcium</keyword>
<keyword id="KW-0349">Heme</keyword>
<keyword id="KW-0376">Hydrogen peroxide</keyword>
<keyword id="KW-0408">Iron</keyword>
<keyword id="KW-0472">Membrane</keyword>
<keyword id="KW-0479">Metal-binding</keyword>
<keyword id="KW-0560">Oxidoreductase</keyword>
<keyword id="KW-0575">Peroxidase</keyword>
<keyword id="KW-0576">Peroxisome</keyword>
<keyword id="KW-0630">Potassium</keyword>
<keyword id="KW-1185">Reference proteome</keyword>
<keyword id="KW-0812">Transmembrane</keyword>
<keyword id="KW-1133">Transmembrane helix</keyword>
<comment type="function">
    <text evidence="1">Plays a key role in hydrogen peroxide removal.</text>
</comment>
<comment type="catalytic activity">
    <reaction evidence="8">
        <text>L-ascorbate + H2O2 = L-dehydroascorbate + 2 H2O</text>
        <dbReference type="Rhea" id="RHEA:22996"/>
        <dbReference type="ChEBI" id="CHEBI:15377"/>
        <dbReference type="ChEBI" id="CHEBI:16240"/>
        <dbReference type="ChEBI" id="CHEBI:38290"/>
        <dbReference type="ChEBI" id="CHEBI:58539"/>
        <dbReference type="EC" id="1.11.1.11"/>
    </reaction>
</comment>
<comment type="cofactor">
    <cofactor evidence="1">
        <name>heme b</name>
        <dbReference type="ChEBI" id="CHEBI:60344"/>
    </cofactor>
    <text evidence="1">Binds 1 heme b (iron(II)-protoporphyrin IX) group.</text>
</comment>
<comment type="subcellular location">
    <subcellularLocation>
        <location evidence="9">Peroxisome membrane</location>
        <topology evidence="2">Single-pass membrane protein</topology>
    </subcellularLocation>
    <text evidence="6">Targets to peroxisomes and to a reticular compartment circulating the nucleus.</text>
</comment>
<comment type="tissue specificity">
    <text evidence="6">Expressed in stems.</text>
</comment>
<comment type="miscellaneous">
    <text evidence="1">Binds one cation per subunit; probably K(+), but might also be Ca(2+).</text>
</comment>
<comment type="similarity">
    <text evidence="8">Belongs to the peroxidase family. Ascorbate peroxidase subfamily.</text>
</comment>
<comment type="caution">
    <text evidence="8">According to PubMed:15599508, it may be peroxisomal. There is however no experimental evidence to prove this.</text>
</comment>
<protein>
    <recommendedName>
        <fullName evidence="8">Probable L-ascorbate peroxidase 3, peroxisomal</fullName>
        <ecNumber evidence="8">1.11.1.11</ecNumber>
    </recommendedName>
    <alternativeName>
        <fullName evidence="7">OsAPx3</fullName>
    </alternativeName>
</protein>
<organism>
    <name type="scientific">Oryza sativa subsp. japonica</name>
    <name type="common">Rice</name>
    <dbReference type="NCBI Taxonomy" id="39947"/>
    <lineage>
        <taxon>Eukaryota</taxon>
        <taxon>Viridiplantae</taxon>
        <taxon>Streptophyta</taxon>
        <taxon>Embryophyta</taxon>
        <taxon>Tracheophyta</taxon>
        <taxon>Spermatophyta</taxon>
        <taxon>Magnoliopsida</taxon>
        <taxon>Liliopsida</taxon>
        <taxon>Poales</taxon>
        <taxon>Poaceae</taxon>
        <taxon>BOP clade</taxon>
        <taxon>Oryzoideae</taxon>
        <taxon>Oryzeae</taxon>
        <taxon>Oryzinae</taxon>
        <taxon>Oryza</taxon>
        <taxon>Oryza sativa</taxon>
    </lineage>
</organism>
<feature type="chain" id="PRO_0000055595" description="Probable L-ascorbate peroxidase 3, peroxisomal">
    <location>
        <begin position="1"/>
        <end position="291"/>
    </location>
</feature>
<feature type="transmembrane region" description="Helical" evidence="2">
    <location>
        <begin position="263"/>
        <end position="283"/>
    </location>
</feature>
<feature type="region of interest" description="Disordered" evidence="5">
    <location>
        <begin position="114"/>
        <end position="133"/>
    </location>
</feature>
<feature type="compositionally biased region" description="Basic and acidic residues" evidence="5">
    <location>
        <begin position="116"/>
        <end position="133"/>
    </location>
</feature>
<feature type="active site" description="Proton acceptor" evidence="3 4">
    <location>
        <position position="41"/>
    </location>
</feature>
<feature type="binding site" description="axial binding residue" evidence="3">
    <location>
        <position position="161"/>
    </location>
    <ligand>
        <name>heme b</name>
        <dbReference type="ChEBI" id="CHEBI:60344"/>
    </ligand>
    <ligandPart>
        <name>Fe</name>
        <dbReference type="ChEBI" id="CHEBI:18248"/>
    </ligandPart>
</feature>
<feature type="binding site" evidence="1">
    <location>
        <position position="162"/>
    </location>
    <ligand>
        <name>K(+)</name>
        <dbReference type="ChEBI" id="CHEBI:29103"/>
    </ligand>
</feature>
<feature type="binding site" evidence="1">
    <location>
        <position position="178"/>
    </location>
    <ligand>
        <name>K(+)</name>
        <dbReference type="ChEBI" id="CHEBI:29103"/>
    </ligand>
</feature>
<feature type="binding site" evidence="1">
    <location>
        <position position="185"/>
    </location>
    <ligand>
        <name>K(+)</name>
        <dbReference type="ChEBI" id="CHEBI:29103"/>
    </ligand>
</feature>
<feature type="site" description="Transition state stabilizer" evidence="3">
    <location>
        <position position="37"/>
    </location>
</feature>
<accession>Q0JEQ2</accession>
<accession>A0A0N7KIP4</accession>
<accession>Q6TY83</accession>
<accession>Q7XWZ7</accession>
<dbReference type="EC" id="1.11.1.11" evidence="8"/>
<dbReference type="EMBL" id="AL606634">
    <property type="protein sequence ID" value="CAD39836.2"/>
    <property type="molecule type" value="Genomic_DNA"/>
</dbReference>
<dbReference type="EMBL" id="AP008210">
    <property type="protein sequence ID" value="BAF14185.1"/>
    <property type="molecule type" value="Genomic_DNA"/>
</dbReference>
<dbReference type="EMBL" id="AP014960">
    <property type="protein sequence ID" value="BAS88185.1"/>
    <property type="molecule type" value="Genomic_DNA"/>
</dbReference>
<dbReference type="EMBL" id="CM000141">
    <property type="protein sequence ID" value="EAZ29827.1"/>
    <property type="molecule type" value="Genomic_DNA"/>
</dbReference>
<dbReference type="RefSeq" id="XP_015634435.1">
    <property type="nucleotide sequence ID" value="XM_015778949.1"/>
</dbReference>
<dbReference type="SMR" id="Q0JEQ2"/>
<dbReference type="FunCoup" id="Q0JEQ2">
    <property type="interactions" value="190"/>
</dbReference>
<dbReference type="STRING" id="39947.Q0JEQ2"/>
<dbReference type="PeroxiBase" id="1867">
    <property type="entry name" value="OsAPx03"/>
</dbReference>
<dbReference type="PaxDb" id="39947-Q0JEQ2"/>
<dbReference type="EnsemblPlants" id="Os04t0223300-00">
    <property type="protein sequence ID" value="Os04t0223300-00"/>
    <property type="gene ID" value="Os04g0223300"/>
</dbReference>
<dbReference type="Gramene" id="Os04t0223300-00">
    <property type="protein sequence ID" value="Os04t0223300-00"/>
    <property type="gene ID" value="Os04g0223300"/>
</dbReference>
<dbReference type="KEGG" id="dosa:Os04g0223300"/>
<dbReference type="eggNOG" id="ENOG502QR1E">
    <property type="taxonomic scope" value="Eukaryota"/>
</dbReference>
<dbReference type="HOGENOM" id="CLU_036959_3_0_1"/>
<dbReference type="InParanoid" id="Q0JEQ2"/>
<dbReference type="OMA" id="KHEANNG"/>
<dbReference type="OrthoDB" id="2859658at2759"/>
<dbReference type="BRENDA" id="1.11.1.11">
    <property type="organism ID" value="4460"/>
</dbReference>
<dbReference type="Proteomes" id="UP000000763">
    <property type="component" value="Chromosome 4"/>
</dbReference>
<dbReference type="Proteomes" id="UP000007752">
    <property type="component" value="Chromosome 4"/>
</dbReference>
<dbReference type="Proteomes" id="UP000059680">
    <property type="component" value="Chromosome 4"/>
</dbReference>
<dbReference type="GO" id="GO:0009507">
    <property type="term" value="C:chloroplast"/>
    <property type="evidence" value="ECO:0000318"/>
    <property type="project" value="GO_Central"/>
</dbReference>
<dbReference type="GO" id="GO:0005778">
    <property type="term" value="C:peroxisomal membrane"/>
    <property type="evidence" value="ECO:0007669"/>
    <property type="project" value="UniProtKB-SubCell"/>
</dbReference>
<dbReference type="GO" id="GO:0020037">
    <property type="term" value="F:heme binding"/>
    <property type="evidence" value="ECO:0007669"/>
    <property type="project" value="InterPro"/>
</dbReference>
<dbReference type="GO" id="GO:0016688">
    <property type="term" value="F:L-ascorbate peroxidase activity"/>
    <property type="evidence" value="ECO:0007669"/>
    <property type="project" value="UniProtKB-EC"/>
</dbReference>
<dbReference type="GO" id="GO:0046872">
    <property type="term" value="F:metal ion binding"/>
    <property type="evidence" value="ECO:0007669"/>
    <property type="project" value="UniProtKB-KW"/>
</dbReference>
<dbReference type="GO" id="GO:0004601">
    <property type="term" value="F:peroxidase activity"/>
    <property type="evidence" value="ECO:0000318"/>
    <property type="project" value="GO_Central"/>
</dbReference>
<dbReference type="GO" id="GO:0034599">
    <property type="term" value="P:cellular response to oxidative stress"/>
    <property type="evidence" value="ECO:0000318"/>
    <property type="project" value="GO_Central"/>
</dbReference>
<dbReference type="GO" id="GO:0042744">
    <property type="term" value="P:hydrogen peroxide catabolic process"/>
    <property type="evidence" value="ECO:0000318"/>
    <property type="project" value="GO_Central"/>
</dbReference>
<dbReference type="GO" id="GO:0000302">
    <property type="term" value="P:response to reactive oxygen species"/>
    <property type="evidence" value="ECO:0000318"/>
    <property type="project" value="GO_Central"/>
</dbReference>
<dbReference type="CDD" id="cd00691">
    <property type="entry name" value="ascorbate_peroxidase"/>
    <property type="match status" value="1"/>
</dbReference>
<dbReference type="FunFam" id="1.10.520.10:FF:000003">
    <property type="entry name" value="Cytosolic ascorbate peroxidase"/>
    <property type="match status" value="1"/>
</dbReference>
<dbReference type="FunFam" id="1.10.420.10:FF:000003">
    <property type="entry name" value="L-ascorbate peroxidase, cytosolic"/>
    <property type="match status" value="1"/>
</dbReference>
<dbReference type="Gene3D" id="1.10.520.10">
    <property type="match status" value="1"/>
</dbReference>
<dbReference type="Gene3D" id="1.10.420.10">
    <property type="entry name" value="Peroxidase, domain 2"/>
    <property type="match status" value="1"/>
</dbReference>
<dbReference type="InterPro" id="IPR044831">
    <property type="entry name" value="Ccp1-like"/>
</dbReference>
<dbReference type="InterPro" id="IPR002016">
    <property type="entry name" value="Haem_peroxidase"/>
</dbReference>
<dbReference type="InterPro" id="IPR010255">
    <property type="entry name" value="Haem_peroxidase_sf"/>
</dbReference>
<dbReference type="InterPro" id="IPR002207">
    <property type="entry name" value="Peroxidase_I"/>
</dbReference>
<dbReference type="InterPro" id="IPR019794">
    <property type="entry name" value="Peroxidases_AS"/>
</dbReference>
<dbReference type="InterPro" id="IPR019793">
    <property type="entry name" value="Peroxidases_heam-ligand_BS"/>
</dbReference>
<dbReference type="PANTHER" id="PTHR31356:SF61">
    <property type="entry name" value="L-ASCORBATE PEROXIDASE 3, PEROXISOMAL-RELATED"/>
    <property type="match status" value="1"/>
</dbReference>
<dbReference type="PANTHER" id="PTHR31356">
    <property type="entry name" value="THYLAKOID LUMENAL 29 KDA PROTEIN, CHLOROPLASTIC-RELATED"/>
    <property type="match status" value="1"/>
</dbReference>
<dbReference type="Pfam" id="PF00141">
    <property type="entry name" value="peroxidase"/>
    <property type="match status" value="1"/>
</dbReference>
<dbReference type="PRINTS" id="PR00459">
    <property type="entry name" value="ASPEROXIDASE"/>
</dbReference>
<dbReference type="PRINTS" id="PR00458">
    <property type="entry name" value="PEROXIDASE"/>
</dbReference>
<dbReference type="SUPFAM" id="SSF48113">
    <property type="entry name" value="Heme-dependent peroxidases"/>
    <property type="match status" value="1"/>
</dbReference>
<dbReference type="PROSITE" id="PS00435">
    <property type="entry name" value="PEROXIDASE_1"/>
    <property type="match status" value="1"/>
</dbReference>
<dbReference type="PROSITE" id="PS00436">
    <property type="entry name" value="PEROXIDASE_2"/>
    <property type="match status" value="1"/>
</dbReference>
<dbReference type="PROSITE" id="PS50873">
    <property type="entry name" value="PEROXIDASE_4"/>
    <property type="match status" value="1"/>
</dbReference>
<proteinExistence type="evidence at transcript level"/>
<name>APX3_ORYSJ</name>
<evidence type="ECO:0000250" key="1"/>
<evidence type="ECO:0000255" key="2"/>
<evidence type="ECO:0000255" key="3">
    <source>
        <dbReference type="PROSITE-ProRule" id="PRU00297"/>
    </source>
</evidence>
<evidence type="ECO:0000255" key="4">
    <source>
        <dbReference type="PROSITE-ProRule" id="PRU10012"/>
    </source>
</evidence>
<evidence type="ECO:0000256" key="5">
    <source>
        <dbReference type="SAM" id="MobiDB-lite"/>
    </source>
</evidence>
<evidence type="ECO:0000269" key="6">
    <source>
    </source>
</evidence>
<evidence type="ECO:0000303" key="7">
    <source>
    </source>
</evidence>
<evidence type="ECO:0000305" key="8"/>
<evidence type="ECO:0000305" key="9">
    <source>
    </source>
</evidence>
<evidence type="ECO:0000312" key="10">
    <source>
        <dbReference type="EMBL" id="BAS88185.1"/>
    </source>
</evidence>
<evidence type="ECO:0000312" key="11">
    <source>
        <dbReference type="EMBL" id="CAD39836.2"/>
    </source>
</evidence>
<evidence type="ECO:0000312" key="12">
    <source>
        <dbReference type="EMBL" id="EAZ29827.1"/>
    </source>
</evidence>
<sequence length="291" mass="32048">MSAAPVVDAEYMAEVERARRDLRALIASKSCAPIMLRLAWHDAGTYDKATKTGGPNGSIRFPQEYSHAANAGIKIAIDLLEPMKQKHPKITYADLYQLAGVVAVEVTGGPTIDYVPGRRDSSDSPEEGRLPDAKKGAAHLREVFYRMGLSDKDIVALSGGHTLGKARPERSGFDGAWTKDPLKFDNSYFIELLKENSEGLLKLPTDKALVEDPTFRRYVELYAKDEDAFFRDYAESHKKLSELGFTPPRSAFIYKSCQKPKSLLMQTAAGVAVAAAVVAWAYLCESNKRLG</sequence>